<comment type="function">
    <text evidence="2">Required for cytoplasmic pre-assembly of axonemal dyneins, thereby playing a central role in motility in cilia and flagella. Involved in pre-assembly of dynein arm complexes in the cytoplasm before intraflagellar transport loads them for the ciliary compartment.</text>
</comment>
<comment type="subunit">
    <text evidence="2">Interacts with Pp1alpha-96A, Pp1-87B, Pp1-13C and flw.</text>
</comment>
<comment type="subcellular location">
    <subcellularLocation>
        <location evidence="2">Cytoplasm</location>
    </subcellularLocation>
</comment>
<comment type="similarity">
    <text evidence="2">Belongs to the PIH1 family. Kintoun subfamily.</text>
</comment>
<sequence>MSASAARSRNKQSKLRDDEQLDISKDEFNRIQEAFGREEFRKLFFDYVEEIQDPENRKIYEEEITQLEKERGVEVRFIHPKPGFVIKTALDGELKCFINIAGSEEIERPKNEVATDPSSGSRGLSWSIPMAQTSSRDDCDAKNNHCKVFDVVFHPDALHLAKRNKQFRQCLIDTALDAVEREYKVSLDRANLKFPKLDYKGIPRPTVIRKLADNPTAEEQEPHPLAHMFPTKPPAPGKPEPRVLPMKTKPTPVPEFTVPRYSIKHSHDVDLSEYTDELDAKLHVTVPRSLVVEIELPLLRSTAECQLDVTSKSVYLFSERQGAKYRLKLDLPFSVDDKAGQARFDTDMRRLSITLPVVRKSTKEEAQMHDTLRHFSREDSGVELHSNSESPVEEDPDGELSDSKADISEISSPTTATVRLANSPFLKNSVHYQLPSKFDCNVLDNVMAFVLHVPNVQPDSIEQLREQRSLHLQFATIGSGYYPTHYAFYVELPAEHEDSAIESVEAEAWDNNVVLKLCLSSQSETPASYLAGLDATELKEYPVHGQYNVKSSGKANAKENAPLDVKFVHNQEGQALKVTIRPGTKEEEEKGNQDQEPESDKQHQQQSQNKKAGKKQRKRNKKERSLSESACADMIFQEPLAKNPELQPKTMFKFPSQRKQRSYSECNDSIGGSHRGILKRFSRYGPRPSMSDSCSSIDDCSSYSCSVDASGTSLFSHSFGGIPEEDRSDAGLSESCKKTVRFNDHIMKQVFRLDSSILGQRKKNQKRRDLKLRAQQRRLSEGDSVDYEETRGSALKQQENQSRNCNKPNGGSVLHDSGLDLTGAPGAHSNHNESEAKNALMFEMDD</sequence>
<keyword id="KW-0963">Cytoplasm</keyword>
<keyword id="KW-0597">Phosphoprotein</keyword>
<feature type="chain" id="PRO_0000365814" description="Protein kintoun">
    <location>
        <begin position="1"/>
        <end position="846"/>
    </location>
</feature>
<feature type="region of interest" description="Disordered" evidence="3">
    <location>
        <begin position="216"/>
        <end position="240"/>
    </location>
</feature>
<feature type="region of interest" description="Disordered" evidence="3">
    <location>
        <begin position="372"/>
        <end position="405"/>
    </location>
</feature>
<feature type="region of interest" description="Disordered" evidence="3">
    <location>
        <begin position="574"/>
        <end position="631"/>
    </location>
</feature>
<feature type="region of interest" description="Disordered" evidence="3">
    <location>
        <begin position="762"/>
        <end position="846"/>
    </location>
</feature>
<feature type="compositionally biased region" description="Basic and acidic residues" evidence="3">
    <location>
        <begin position="372"/>
        <end position="382"/>
    </location>
</feature>
<feature type="compositionally biased region" description="Acidic residues" evidence="3">
    <location>
        <begin position="391"/>
        <end position="400"/>
    </location>
</feature>
<feature type="compositionally biased region" description="Basic and acidic residues" evidence="3">
    <location>
        <begin position="583"/>
        <end position="603"/>
    </location>
</feature>
<feature type="compositionally biased region" description="Basic residues" evidence="3">
    <location>
        <begin position="611"/>
        <end position="622"/>
    </location>
</feature>
<feature type="compositionally biased region" description="Basic residues" evidence="3">
    <location>
        <begin position="762"/>
        <end position="776"/>
    </location>
</feature>
<feature type="compositionally biased region" description="Polar residues" evidence="3">
    <location>
        <begin position="795"/>
        <end position="809"/>
    </location>
</feature>
<feature type="modified residue" description="Phosphoserine" evidence="1">
    <location>
        <position position="380"/>
    </location>
</feature>
<feature type="modified residue" description="Phosphoserine" evidence="1">
    <location>
        <position position="780"/>
    </location>
</feature>
<accession>B4P238</accession>
<gene>
    <name evidence="2" type="primary">Nop17l</name>
    <name evidence="2" type="synonym">Ppi20</name>
    <name type="ORF">GE23618</name>
</gene>
<reference key="1">
    <citation type="journal article" date="2007" name="Nature">
        <title>Evolution of genes and genomes on the Drosophila phylogeny.</title>
        <authorList>
            <consortium name="Drosophila 12 genomes consortium"/>
        </authorList>
    </citation>
    <scope>NUCLEOTIDE SEQUENCE [LARGE SCALE GENOMIC DNA]</scope>
    <source>
        <strain>Tai18E2 / Tucson 14021-0261.01</strain>
    </source>
</reference>
<protein>
    <recommendedName>
        <fullName evidence="2">Protein kintoun</fullName>
    </recommendedName>
    <alternativeName>
        <fullName evidence="2">Dynein assembly factor 2, axonemal homolog</fullName>
    </alternativeName>
    <alternativeName>
        <fullName evidence="2">PP1-interacting protein 20</fullName>
    </alternativeName>
</protein>
<evidence type="ECO:0000250" key="1">
    <source>
        <dbReference type="UniProtKB" id="Q0E9G3"/>
    </source>
</evidence>
<evidence type="ECO:0000255" key="2">
    <source>
        <dbReference type="HAMAP-Rule" id="MF_03069"/>
    </source>
</evidence>
<evidence type="ECO:0000256" key="3">
    <source>
        <dbReference type="SAM" id="MobiDB-lite"/>
    </source>
</evidence>
<organism>
    <name type="scientific">Drosophila yakuba</name>
    <name type="common">Fruit fly</name>
    <dbReference type="NCBI Taxonomy" id="7245"/>
    <lineage>
        <taxon>Eukaryota</taxon>
        <taxon>Metazoa</taxon>
        <taxon>Ecdysozoa</taxon>
        <taxon>Arthropoda</taxon>
        <taxon>Hexapoda</taxon>
        <taxon>Insecta</taxon>
        <taxon>Pterygota</taxon>
        <taxon>Neoptera</taxon>
        <taxon>Endopterygota</taxon>
        <taxon>Diptera</taxon>
        <taxon>Brachycera</taxon>
        <taxon>Muscomorpha</taxon>
        <taxon>Ephydroidea</taxon>
        <taxon>Drosophilidae</taxon>
        <taxon>Drosophila</taxon>
        <taxon>Sophophora</taxon>
    </lineage>
</organism>
<dbReference type="EMBL" id="CM000157">
    <property type="protein sequence ID" value="EDW89239.1"/>
    <property type="molecule type" value="Genomic_DNA"/>
</dbReference>
<dbReference type="SMR" id="B4P238"/>
<dbReference type="EnsemblMetazoa" id="FBtr0270136">
    <property type="protein sequence ID" value="FBpp0268628"/>
    <property type="gene ID" value="FBgn0240791"/>
</dbReference>
<dbReference type="EnsemblMetazoa" id="FBtr0402667">
    <property type="protein sequence ID" value="FBpp0361498"/>
    <property type="gene ID" value="FBgn0240791"/>
</dbReference>
<dbReference type="EnsemblMetazoa" id="XM_002089491.3">
    <property type="protein sequence ID" value="XP_002089527.1"/>
    <property type="gene ID" value="LOC6528481"/>
</dbReference>
<dbReference type="EnsemblMetazoa" id="XM_015198859.3">
    <property type="protein sequence ID" value="XP_015054345.1"/>
    <property type="gene ID" value="LOC6528481"/>
</dbReference>
<dbReference type="EnsemblMetazoa" id="XM_039370348.2">
    <property type="protein sequence ID" value="XP_039226282.1"/>
    <property type="gene ID" value="LOC6528481"/>
</dbReference>
<dbReference type="GeneID" id="6528481"/>
<dbReference type="KEGG" id="dya:Dyak_GE23618"/>
<dbReference type="eggNOG" id="KOG4356">
    <property type="taxonomic scope" value="Eukaryota"/>
</dbReference>
<dbReference type="HOGENOM" id="CLU_012715_0_0_1"/>
<dbReference type="OMA" id="CFLNISK"/>
<dbReference type="OrthoDB" id="546764at2759"/>
<dbReference type="PhylomeDB" id="B4P238"/>
<dbReference type="Proteomes" id="UP000002282">
    <property type="component" value="Chromosome 2L"/>
</dbReference>
<dbReference type="GO" id="GO:0005737">
    <property type="term" value="C:cytoplasm"/>
    <property type="evidence" value="ECO:0007669"/>
    <property type="project" value="UniProtKB-SubCell"/>
</dbReference>
<dbReference type="GO" id="GO:0008157">
    <property type="term" value="F:protein phosphatase 1 binding"/>
    <property type="evidence" value="ECO:0007669"/>
    <property type="project" value="EnsemblMetazoa"/>
</dbReference>
<dbReference type="GO" id="GO:0070286">
    <property type="term" value="P:axonemal dynein complex assembly"/>
    <property type="evidence" value="ECO:0007669"/>
    <property type="project" value="UniProtKB-UniRule"/>
</dbReference>
<dbReference type="GO" id="GO:0060285">
    <property type="term" value="P:cilium-dependent cell motility"/>
    <property type="evidence" value="ECO:0007669"/>
    <property type="project" value="UniProtKB-UniRule"/>
</dbReference>
<dbReference type="HAMAP" id="MF_03069">
    <property type="entry name" value="Kintoun"/>
    <property type="match status" value="1"/>
</dbReference>
<dbReference type="InterPro" id="IPR034727">
    <property type="entry name" value="Kintoun"/>
</dbReference>
<dbReference type="InterPro" id="IPR050734">
    <property type="entry name" value="PIH1/Kintoun_subfamily"/>
</dbReference>
<dbReference type="InterPro" id="IPR012981">
    <property type="entry name" value="PIH1_N"/>
</dbReference>
<dbReference type="InterPro" id="IPR041442">
    <property type="entry name" value="PIH1D1/2/3_CS-like"/>
</dbReference>
<dbReference type="PANTHER" id="PTHR22997">
    <property type="entry name" value="PIH1 DOMAIN-CONTAINING PROTEIN 1"/>
    <property type="match status" value="1"/>
</dbReference>
<dbReference type="PANTHER" id="PTHR22997:SF3">
    <property type="entry name" value="PROTEIN KINTOUN"/>
    <property type="match status" value="1"/>
</dbReference>
<dbReference type="Pfam" id="PF08190">
    <property type="entry name" value="PIH1"/>
    <property type="match status" value="1"/>
</dbReference>
<dbReference type="Pfam" id="PF18201">
    <property type="entry name" value="PIH1_CS"/>
    <property type="match status" value="1"/>
</dbReference>
<proteinExistence type="inferred from homology"/>
<name>KTU_DROYA</name>